<evidence type="ECO:0000255" key="1">
    <source>
        <dbReference type="HAMAP-Rule" id="MF_01569"/>
    </source>
</evidence>
<accession>Q8NZB4</accession>
<organism>
    <name type="scientific">Streptococcus pyogenes serotype M18 (strain MGAS8232)</name>
    <dbReference type="NCBI Taxonomy" id="186103"/>
    <lineage>
        <taxon>Bacteria</taxon>
        <taxon>Bacillati</taxon>
        <taxon>Bacillota</taxon>
        <taxon>Bacilli</taxon>
        <taxon>Lactobacillales</taxon>
        <taxon>Streptococcaceae</taxon>
        <taxon>Streptococcus</taxon>
    </lineage>
</organism>
<proteinExistence type="inferred from homology"/>
<comment type="function">
    <text evidence="1">Catalyzes the attachment of proline to tRNA(Pro) in a two-step reaction: proline is first activated by ATP to form Pro-AMP and then transferred to the acceptor end of tRNA(Pro). As ProRS can inadvertently accommodate and process non-cognate amino acids such as alanine and cysteine, to avoid such errors it has two additional distinct editing activities against alanine. One activity is designated as 'pretransfer' editing and involves the tRNA(Pro)-independent hydrolysis of activated Ala-AMP. The other activity is designated 'posttransfer' editing and involves deacylation of mischarged Ala-tRNA(Pro). The misacylated Cys-tRNA(Pro) is not edited by ProRS.</text>
</comment>
<comment type="catalytic activity">
    <reaction evidence="1">
        <text>tRNA(Pro) + L-proline + ATP = L-prolyl-tRNA(Pro) + AMP + diphosphate</text>
        <dbReference type="Rhea" id="RHEA:14305"/>
        <dbReference type="Rhea" id="RHEA-COMP:9700"/>
        <dbReference type="Rhea" id="RHEA-COMP:9702"/>
        <dbReference type="ChEBI" id="CHEBI:30616"/>
        <dbReference type="ChEBI" id="CHEBI:33019"/>
        <dbReference type="ChEBI" id="CHEBI:60039"/>
        <dbReference type="ChEBI" id="CHEBI:78442"/>
        <dbReference type="ChEBI" id="CHEBI:78532"/>
        <dbReference type="ChEBI" id="CHEBI:456215"/>
        <dbReference type="EC" id="6.1.1.15"/>
    </reaction>
</comment>
<comment type="subunit">
    <text evidence="1">Homodimer.</text>
</comment>
<comment type="subcellular location">
    <subcellularLocation>
        <location evidence="1">Cytoplasm</location>
    </subcellularLocation>
</comment>
<comment type="domain">
    <text evidence="1">Consists of three domains: the N-terminal catalytic domain, the editing domain and the C-terminal anticodon-binding domain.</text>
</comment>
<comment type="similarity">
    <text evidence="1">Belongs to the class-II aminoacyl-tRNA synthetase family. ProS type 1 subfamily.</text>
</comment>
<sequence length="618" mass="68682">MKQSKLLIPTLREMPSDAQVISHALMVRAGYVRQVSAGIYAYLPLANRTIEKFKTIMREEFEKIGAVEMLAPALLTADLWRESGRYETYGEDLYKLKNRDNSDFILGPTHEETFTTLVRNAVKSYKQLPLNLYQIQSKYRDEKRPRNGLLRTREFIMKDGYSFHHNYEDLDVTYEDYRQAYEAIFTRAGLDFKGIIGDGGAMGGKDSQEFMAITPARTDLDRWVVLDKSIASMDDIPKEVLEEIKAELAAWMISGEDTIAYSTESSYAANLEMATNEYKPSSKVAAEDALVEVETPHCKTIDEVAAFLSVDETQTIKTLLFVADNEPVVALLVGNDHINTVKLKNYLAADFLEPASEEEARAFFGAGFGSLGPVNLAQGSRIVADRKVQNLTNAVAGANKDGFHVTGVNPGRDFQAEYVDIREVKEGEMSPDGHGVLQFARGIEVGHIFKLGTRYSDSMGATILDENGRAVPIVMGCYGIGVSRILSAVIEQHARLFVNKTPKGDYRYAWGINFPKELAPFDVHLITVNVKDQVAQDLTAKLEADLMAKGYDVLTDDRNERVGSKFSDSDLIGLPIRVTVGKKAAEGIVEIKIKATGDSIEVNAENLIETLEILTKEH</sequence>
<reference key="1">
    <citation type="journal article" date="2002" name="Proc. Natl. Acad. Sci. U.S.A.">
        <title>Genome sequence and comparative microarray analysis of serotype M18 group A Streptococcus strains associated with acute rheumatic fever outbreaks.</title>
        <authorList>
            <person name="Smoot J.C."/>
            <person name="Barbian K.D."/>
            <person name="Van Gompel J.J."/>
            <person name="Smoot L.M."/>
            <person name="Chaussee M.S."/>
            <person name="Sylva G.L."/>
            <person name="Sturdevant D.E."/>
            <person name="Ricklefs S.M."/>
            <person name="Porcella S.F."/>
            <person name="Parkins L.D."/>
            <person name="Beres S.B."/>
            <person name="Campbell D.S."/>
            <person name="Smith T.M."/>
            <person name="Zhang Q."/>
            <person name="Kapur V."/>
            <person name="Daly J.A."/>
            <person name="Veasy L.G."/>
            <person name="Musser J.M."/>
        </authorList>
    </citation>
    <scope>NUCLEOTIDE SEQUENCE [LARGE SCALE GENOMIC DNA]</scope>
    <source>
        <strain>MGAS8232</strain>
    </source>
</reference>
<dbReference type="EC" id="6.1.1.15" evidence="1"/>
<dbReference type="EMBL" id="AE009949">
    <property type="protein sequence ID" value="AAL98507.1"/>
    <property type="molecule type" value="Genomic_DNA"/>
</dbReference>
<dbReference type="RefSeq" id="WP_011018244.1">
    <property type="nucleotide sequence ID" value="NC_003485.1"/>
</dbReference>
<dbReference type="SMR" id="Q8NZB4"/>
<dbReference type="KEGG" id="spm:spyM18_2030"/>
<dbReference type="HOGENOM" id="CLU_016739_0_0_9"/>
<dbReference type="GO" id="GO:0005829">
    <property type="term" value="C:cytosol"/>
    <property type="evidence" value="ECO:0007669"/>
    <property type="project" value="TreeGrafter"/>
</dbReference>
<dbReference type="GO" id="GO:0002161">
    <property type="term" value="F:aminoacyl-tRNA deacylase activity"/>
    <property type="evidence" value="ECO:0007669"/>
    <property type="project" value="InterPro"/>
</dbReference>
<dbReference type="GO" id="GO:0005524">
    <property type="term" value="F:ATP binding"/>
    <property type="evidence" value="ECO:0007669"/>
    <property type="project" value="UniProtKB-UniRule"/>
</dbReference>
<dbReference type="GO" id="GO:0140096">
    <property type="term" value="F:catalytic activity, acting on a protein"/>
    <property type="evidence" value="ECO:0007669"/>
    <property type="project" value="UniProtKB-ARBA"/>
</dbReference>
<dbReference type="GO" id="GO:0004827">
    <property type="term" value="F:proline-tRNA ligase activity"/>
    <property type="evidence" value="ECO:0007669"/>
    <property type="project" value="UniProtKB-UniRule"/>
</dbReference>
<dbReference type="GO" id="GO:0016740">
    <property type="term" value="F:transferase activity"/>
    <property type="evidence" value="ECO:0007669"/>
    <property type="project" value="UniProtKB-ARBA"/>
</dbReference>
<dbReference type="GO" id="GO:0006433">
    <property type="term" value="P:prolyl-tRNA aminoacylation"/>
    <property type="evidence" value="ECO:0007669"/>
    <property type="project" value="UniProtKB-UniRule"/>
</dbReference>
<dbReference type="CDD" id="cd04334">
    <property type="entry name" value="ProRS-INS"/>
    <property type="match status" value="1"/>
</dbReference>
<dbReference type="CDD" id="cd00861">
    <property type="entry name" value="ProRS_anticodon_short"/>
    <property type="match status" value="1"/>
</dbReference>
<dbReference type="FunFam" id="3.40.50.800:FF:000011">
    <property type="entry name" value="Proline--tRNA ligase"/>
    <property type="match status" value="1"/>
</dbReference>
<dbReference type="Gene3D" id="3.40.50.800">
    <property type="entry name" value="Anticodon-binding domain"/>
    <property type="match status" value="1"/>
</dbReference>
<dbReference type="Gene3D" id="3.30.930.10">
    <property type="entry name" value="Bira Bifunctional Protein, Domain 2"/>
    <property type="match status" value="2"/>
</dbReference>
<dbReference type="Gene3D" id="3.90.960.10">
    <property type="entry name" value="YbaK/aminoacyl-tRNA synthetase-associated domain"/>
    <property type="match status" value="1"/>
</dbReference>
<dbReference type="HAMAP" id="MF_01569">
    <property type="entry name" value="Pro_tRNA_synth_type1"/>
    <property type="match status" value="1"/>
</dbReference>
<dbReference type="InterPro" id="IPR002314">
    <property type="entry name" value="aa-tRNA-synt_IIb"/>
</dbReference>
<dbReference type="InterPro" id="IPR006195">
    <property type="entry name" value="aa-tRNA-synth_II"/>
</dbReference>
<dbReference type="InterPro" id="IPR045864">
    <property type="entry name" value="aa-tRNA-synth_II/BPL/LPL"/>
</dbReference>
<dbReference type="InterPro" id="IPR004154">
    <property type="entry name" value="Anticodon-bd"/>
</dbReference>
<dbReference type="InterPro" id="IPR036621">
    <property type="entry name" value="Anticodon-bd_dom_sf"/>
</dbReference>
<dbReference type="InterPro" id="IPR002316">
    <property type="entry name" value="Pro-tRNA-ligase_IIa"/>
</dbReference>
<dbReference type="InterPro" id="IPR004500">
    <property type="entry name" value="Pro-tRNA-synth_IIa_bac-type"/>
</dbReference>
<dbReference type="InterPro" id="IPR023717">
    <property type="entry name" value="Pro-tRNA-Synthase_IIa_type1"/>
</dbReference>
<dbReference type="InterPro" id="IPR050062">
    <property type="entry name" value="Pro-tRNA_synthetase"/>
</dbReference>
<dbReference type="InterPro" id="IPR044140">
    <property type="entry name" value="ProRS_anticodon_short"/>
</dbReference>
<dbReference type="InterPro" id="IPR036754">
    <property type="entry name" value="YbaK/aa-tRNA-synt-asso_dom_sf"/>
</dbReference>
<dbReference type="InterPro" id="IPR007214">
    <property type="entry name" value="YbaK/aa-tRNA-synth-assoc-dom"/>
</dbReference>
<dbReference type="NCBIfam" id="NF006625">
    <property type="entry name" value="PRK09194.1"/>
    <property type="match status" value="1"/>
</dbReference>
<dbReference type="NCBIfam" id="TIGR00409">
    <property type="entry name" value="proS_fam_II"/>
    <property type="match status" value="2"/>
</dbReference>
<dbReference type="PANTHER" id="PTHR42753">
    <property type="entry name" value="MITOCHONDRIAL RIBOSOME PROTEIN L39/PROLYL-TRNA LIGASE FAMILY MEMBER"/>
    <property type="match status" value="1"/>
</dbReference>
<dbReference type="PANTHER" id="PTHR42753:SF2">
    <property type="entry name" value="PROLINE--TRNA LIGASE"/>
    <property type="match status" value="1"/>
</dbReference>
<dbReference type="Pfam" id="PF03129">
    <property type="entry name" value="HGTP_anticodon"/>
    <property type="match status" value="1"/>
</dbReference>
<dbReference type="Pfam" id="PF00587">
    <property type="entry name" value="tRNA-synt_2b"/>
    <property type="match status" value="1"/>
</dbReference>
<dbReference type="Pfam" id="PF04073">
    <property type="entry name" value="tRNA_edit"/>
    <property type="match status" value="1"/>
</dbReference>
<dbReference type="PRINTS" id="PR01046">
    <property type="entry name" value="TRNASYNTHPRO"/>
</dbReference>
<dbReference type="SUPFAM" id="SSF52954">
    <property type="entry name" value="Class II aaRS ABD-related"/>
    <property type="match status" value="1"/>
</dbReference>
<dbReference type="SUPFAM" id="SSF55681">
    <property type="entry name" value="Class II aaRS and biotin synthetases"/>
    <property type="match status" value="1"/>
</dbReference>
<dbReference type="SUPFAM" id="SSF55826">
    <property type="entry name" value="YbaK/ProRS associated domain"/>
    <property type="match status" value="1"/>
</dbReference>
<dbReference type="PROSITE" id="PS50862">
    <property type="entry name" value="AA_TRNA_LIGASE_II"/>
    <property type="match status" value="1"/>
</dbReference>
<keyword id="KW-0030">Aminoacyl-tRNA synthetase</keyword>
<keyword id="KW-0067">ATP-binding</keyword>
<keyword id="KW-0963">Cytoplasm</keyword>
<keyword id="KW-0436">Ligase</keyword>
<keyword id="KW-0547">Nucleotide-binding</keyword>
<keyword id="KW-0648">Protein biosynthesis</keyword>
<protein>
    <recommendedName>
        <fullName evidence="1">Proline--tRNA ligase</fullName>
        <ecNumber evidence="1">6.1.1.15</ecNumber>
    </recommendedName>
    <alternativeName>
        <fullName evidence="1">Prolyl-tRNA synthetase</fullName>
        <shortName evidence="1">ProRS</shortName>
    </alternativeName>
</protein>
<name>SYP_STRP8</name>
<feature type="chain" id="PRO_0000248782" description="Proline--tRNA ligase">
    <location>
        <begin position="1"/>
        <end position="618"/>
    </location>
</feature>
<gene>
    <name evidence="1" type="primary">proS</name>
    <name type="ordered locus">spyM18_2030</name>
</gene>